<comment type="function">
    <text evidence="1">Catalyzes the conversion of 4-hydroxy-tetrahydrodipicolinate (HTPA) to tetrahydrodipicolinate.</text>
</comment>
<comment type="catalytic activity">
    <reaction evidence="1">
        <text>(S)-2,3,4,5-tetrahydrodipicolinate + NAD(+) + H2O = (2S,4S)-4-hydroxy-2,3,4,5-tetrahydrodipicolinate + NADH + H(+)</text>
        <dbReference type="Rhea" id="RHEA:35323"/>
        <dbReference type="ChEBI" id="CHEBI:15377"/>
        <dbReference type="ChEBI" id="CHEBI:15378"/>
        <dbReference type="ChEBI" id="CHEBI:16845"/>
        <dbReference type="ChEBI" id="CHEBI:57540"/>
        <dbReference type="ChEBI" id="CHEBI:57945"/>
        <dbReference type="ChEBI" id="CHEBI:67139"/>
        <dbReference type="EC" id="1.17.1.8"/>
    </reaction>
</comment>
<comment type="catalytic activity">
    <reaction evidence="1">
        <text>(S)-2,3,4,5-tetrahydrodipicolinate + NADP(+) + H2O = (2S,4S)-4-hydroxy-2,3,4,5-tetrahydrodipicolinate + NADPH + H(+)</text>
        <dbReference type="Rhea" id="RHEA:35331"/>
        <dbReference type="ChEBI" id="CHEBI:15377"/>
        <dbReference type="ChEBI" id="CHEBI:15378"/>
        <dbReference type="ChEBI" id="CHEBI:16845"/>
        <dbReference type="ChEBI" id="CHEBI:57783"/>
        <dbReference type="ChEBI" id="CHEBI:58349"/>
        <dbReference type="ChEBI" id="CHEBI:67139"/>
        <dbReference type="EC" id="1.17.1.8"/>
    </reaction>
</comment>
<comment type="pathway">
    <text evidence="1">Amino-acid biosynthesis; L-lysine biosynthesis via DAP pathway; (S)-tetrahydrodipicolinate from L-aspartate: step 4/4.</text>
</comment>
<comment type="subcellular location">
    <subcellularLocation>
        <location evidence="1">Cytoplasm</location>
    </subcellularLocation>
</comment>
<comment type="similarity">
    <text evidence="1">Belongs to the DapB family.</text>
</comment>
<comment type="caution">
    <text evidence="2">Was originally thought to be a dihydrodipicolinate reductase (DHDPR), catalyzing the conversion of dihydrodipicolinate to tetrahydrodipicolinate. However, it was shown in E.coli that the substrate of the enzymatic reaction is not dihydrodipicolinate (DHDP) but in fact (2S,4S)-4-hydroxy-2,3,4,5-tetrahydrodipicolinic acid (HTPA), the product released by the DapA-catalyzed reaction.</text>
</comment>
<proteinExistence type="inferred from homology"/>
<gene>
    <name evidence="1" type="primary">dapB</name>
    <name type="ordered locus">MW1284</name>
</gene>
<dbReference type="EC" id="1.17.1.8" evidence="1"/>
<dbReference type="EMBL" id="BA000033">
    <property type="protein sequence ID" value="BAB95149.1"/>
    <property type="molecule type" value="Genomic_DNA"/>
</dbReference>
<dbReference type="RefSeq" id="WP_000698229.1">
    <property type="nucleotide sequence ID" value="NC_003923.1"/>
</dbReference>
<dbReference type="SMR" id="Q8NWS4"/>
<dbReference type="KEGG" id="sam:MW1284"/>
<dbReference type="HOGENOM" id="CLU_047479_2_2_9"/>
<dbReference type="UniPathway" id="UPA00034">
    <property type="reaction ID" value="UER00018"/>
</dbReference>
<dbReference type="GO" id="GO:0005829">
    <property type="term" value="C:cytosol"/>
    <property type="evidence" value="ECO:0007669"/>
    <property type="project" value="TreeGrafter"/>
</dbReference>
<dbReference type="GO" id="GO:0008839">
    <property type="term" value="F:4-hydroxy-tetrahydrodipicolinate reductase"/>
    <property type="evidence" value="ECO:0007669"/>
    <property type="project" value="UniProtKB-EC"/>
</dbReference>
<dbReference type="GO" id="GO:0051287">
    <property type="term" value="F:NAD binding"/>
    <property type="evidence" value="ECO:0007669"/>
    <property type="project" value="UniProtKB-UniRule"/>
</dbReference>
<dbReference type="GO" id="GO:0050661">
    <property type="term" value="F:NADP binding"/>
    <property type="evidence" value="ECO:0007669"/>
    <property type="project" value="UniProtKB-UniRule"/>
</dbReference>
<dbReference type="GO" id="GO:0016726">
    <property type="term" value="F:oxidoreductase activity, acting on CH or CH2 groups, NAD or NADP as acceptor"/>
    <property type="evidence" value="ECO:0007669"/>
    <property type="project" value="UniProtKB-UniRule"/>
</dbReference>
<dbReference type="GO" id="GO:0019877">
    <property type="term" value="P:diaminopimelate biosynthetic process"/>
    <property type="evidence" value="ECO:0007669"/>
    <property type="project" value="UniProtKB-UniRule"/>
</dbReference>
<dbReference type="GO" id="GO:0009089">
    <property type="term" value="P:lysine biosynthetic process via diaminopimelate"/>
    <property type="evidence" value="ECO:0007669"/>
    <property type="project" value="UniProtKB-UniRule"/>
</dbReference>
<dbReference type="CDD" id="cd02274">
    <property type="entry name" value="DHDPR_N"/>
    <property type="match status" value="1"/>
</dbReference>
<dbReference type="FunFam" id="3.30.360.10:FF:000009">
    <property type="entry name" value="4-hydroxy-tetrahydrodipicolinate reductase"/>
    <property type="match status" value="1"/>
</dbReference>
<dbReference type="Gene3D" id="3.30.360.10">
    <property type="entry name" value="Dihydrodipicolinate Reductase, domain 2"/>
    <property type="match status" value="1"/>
</dbReference>
<dbReference type="Gene3D" id="3.40.50.720">
    <property type="entry name" value="NAD(P)-binding Rossmann-like Domain"/>
    <property type="match status" value="1"/>
</dbReference>
<dbReference type="HAMAP" id="MF_00102">
    <property type="entry name" value="DapB"/>
    <property type="match status" value="1"/>
</dbReference>
<dbReference type="InterPro" id="IPR022663">
    <property type="entry name" value="DapB_C"/>
</dbReference>
<dbReference type="InterPro" id="IPR000846">
    <property type="entry name" value="DapB_N"/>
</dbReference>
<dbReference type="InterPro" id="IPR022664">
    <property type="entry name" value="DapB_N_CS"/>
</dbReference>
<dbReference type="InterPro" id="IPR023940">
    <property type="entry name" value="DHDPR_bac"/>
</dbReference>
<dbReference type="InterPro" id="IPR036291">
    <property type="entry name" value="NAD(P)-bd_dom_sf"/>
</dbReference>
<dbReference type="NCBIfam" id="TIGR00036">
    <property type="entry name" value="dapB"/>
    <property type="match status" value="1"/>
</dbReference>
<dbReference type="PANTHER" id="PTHR20836:SF7">
    <property type="entry name" value="4-HYDROXY-TETRAHYDRODIPICOLINATE REDUCTASE"/>
    <property type="match status" value="1"/>
</dbReference>
<dbReference type="PANTHER" id="PTHR20836">
    <property type="entry name" value="DIHYDRODIPICOLINATE REDUCTASE"/>
    <property type="match status" value="1"/>
</dbReference>
<dbReference type="Pfam" id="PF05173">
    <property type="entry name" value="DapB_C"/>
    <property type="match status" value="1"/>
</dbReference>
<dbReference type="Pfam" id="PF01113">
    <property type="entry name" value="DapB_N"/>
    <property type="match status" value="1"/>
</dbReference>
<dbReference type="PIRSF" id="PIRSF000161">
    <property type="entry name" value="DHPR"/>
    <property type="match status" value="1"/>
</dbReference>
<dbReference type="SUPFAM" id="SSF55347">
    <property type="entry name" value="Glyceraldehyde-3-phosphate dehydrogenase-like, C-terminal domain"/>
    <property type="match status" value="1"/>
</dbReference>
<dbReference type="SUPFAM" id="SSF51735">
    <property type="entry name" value="NAD(P)-binding Rossmann-fold domains"/>
    <property type="match status" value="1"/>
</dbReference>
<dbReference type="PROSITE" id="PS01298">
    <property type="entry name" value="DAPB"/>
    <property type="match status" value="1"/>
</dbReference>
<reference key="1">
    <citation type="journal article" date="2002" name="Lancet">
        <title>Genome and virulence determinants of high virulence community-acquired MRSA.</title>
        <authorList>
            <person name="Baba T."/>
            <person name="Takeuchi F."/>
            <person name="Kuroda M."/>
            <person name="Yuzawa H."/>
            <person name="Aoki K."/>
            <person name="Oguchi A."/>
            <person name="Nagai Y."/>
            <person name="Iwama N."/>
            <person name="Asano K."/>
            <person name="Naimi T."/>
            <person name="Kuroda H."/>
            <person name="Cui L."/>
            <person name="Yamamoto K."/>
            <person name="Hiramatsu K."/>
        </authorList>
    </citation>
    <scope>NUCLEOTIDE SEQUENCE [LARGE SCALE GENOMIC DNA]</scope>
    <source>
        <strain>MW2</strain>
    </source>
</reference>
<protein>
    <recommendedName>
        <fullName evidence="1">4-hydroxy-tetrahydrodipicolinate reductase</fullName>
        <shortName evidence="1">HTPA reductase</shortName>
        <ecNumber evidence="1">1.17.1.8</ecNumber>
    </recommendedName>
</protein>
<organism>
    <name type="scientific">Staphylococcus aureus (strain MW2)</name>
    <dbReference type="NCBI Taxonomy" id="196620"/>
    <lineage>
        <taxon>Bacteria</taxon>
        <taxon>Bacillati</taxon>
        <taxon>Bacillota</taxon>
        <taxon>Bacilli</taxon>
        <taxon>Bacillales</taxon>
        <taxon>Staphylococcaceae</taxon>
        <taxon>Staphylococcus</taxon>
    </lineage>
</organism>
<feature type="chain" id="PRO_0000141491" description="4-hydroxy-tetrahydrodipicolinate reductase">
    <location>
        <begin position="1"/>
        <end position="240"/>
    </location>
</feature>
<feature type="active site" description="Proton donor/acceptor" evidence="1">
    <location>
        <position position="135"/>
    </location>
</feature>
<feature type="active site" description="Proton donor" evidence="1">
    <location>
        <position position="139"/>
    </location>
</feature>
<feature type="binding site" evidence="1">
    <location>
        <begin position="79"/>
        <end position="81"/>
    </location>
    <ligand>
        <name>NAD(+)</name>
        <dbReference type="ChEBI" id="CHEBI:57540"/>
    </ligand>
</feature>
<feature type="binding site" evidence="1">
    <location>
        <begin position="103"/>
        <end position="106"/>
    </location>
    <ligand>
        <name>NAD(+)</name>
        <dbReference type="ChEBI" id="CHEBI:57540"/>
    </ligand>
</feature>
<feature type="binding site" evidence="1">
    <location>
        <position position="136"/>
    </location>
    <ligand>
        <name>(S)-2,3,4,5-tetrahydrodipicolinate</name>
        <dbReference type="ChEBI" id="CHEBI:16845"/>
    </ligand>
</feature>
<feature type="binding site" evidence="1">
    <location>
        <begin position="145"/>
        <end position="146"/>
    </location>
    <ligand>
        <name>(S)-2,3,4,5-tetrahydrodipicolinate</name>
        <dbReference type="ChEBI" id="CHEBI:16845"/>
    </ligand>
</feature>
<accession>Q8NWS4</accession>
<keyword id="KW-0028">Amino-acid biosynthesis</keyword>
<keyword id="KW-0963">Cytoplasm</keyword>
<keyword id="KW-0220">Diaminopimelate biosynthesis</keyword>
<keyword id="KW-0457">Lysine biosynthesis</keyword>
<keyword id="KW-0520">NAD</keyword>
<keyword id="KW-0521">NADP</keyword>
<keyword id="KW-0560">Oxidoreductase</keyword>
<name>DAPB_STAAW</name>
<sequence>MKILLIGYGAMNQRVARLAEEKGHEIVGVIENTPKATTPYQQYQHIADVKDADVAIDFSNPNLLFPLLDEEFHLPLVVATTGEKEKLLNKLDELSQNIPVFFSANMSYGVHALTKILAAAVPLLDEFDIELTEAHHNKKVDAPSGTLEKLYDVIVSLKENVTPVYDRHELNEKRQPQDIGIHSIRGGTIVGEHEVLFAGTDETIQITHRAQSKDIFANGAIQAAERLVNKPNGFYTFDNL</sequence>
<evidence type="ECO:0000255" key="1">
    <source>
        <dbReference type="HAMAP-Rule" id="MF_00102"/>
    </source>
</evidence>
<evidence type="ECO:0000305" key="2"/>